<reference key="1">
    <citation type="journal article" date="2005" name="J. Bacteriol.">
        <title>Insights on evolution of virulence and resistance from the complete genome analysis of an early methicillin-resistant Staphylococcus aureus strain and a biofilm-producing methicillin-resistant Staphylococcus epidermidis strain.</title>
        <authorList>
            <person name="Gill S.R."/>
            <person name="Fouts D.E."/>
            <person name="Archer G.L."/>
            <person name="Mongodin E.F."/>
            <person name="DeBoy R.T."/>
            <person name="Ravel J."/>
            <person name="Paulsen I.T."/>
            <person name="Kolonay J.F."/>
            <person name="Brinkac L.M."/>
            <person name="Beanan M.J."/>
            <person name="Dodson R.J."/>
            <person name="Daugherty S.C."/>
            <person name="Madupu R."/>
            <person name="Angiuoli S.V."/>
            <person name="Durkin A.S."/>
            <person name="Haft D.H."/>
            <person name="Vamathevan J.J."/>
            <person name="Khouri H."/>
            <person name="Utterback T.R."/>
            <person name="Lee C."/>
            <person name="Dimitrov G."/>
            <person name="Jiang L."/>
            <person name="Qin H."/>
            <person name="Weidman J."/>
            <person name="Tran K."/>
            <person name="Kang K.H."/>
            <person name="Hance I.R."/>
            <person name="Nelson K.E."/>
            <person name="Fraser C.M."/>
        </authorList>
    </citation>
    <scope>NUCLEOTIDE SEQUENCE [LARGE SCALE GENOMIC DNA]</scope>
    <source>
        <strain>ATCC 35984 / DSM 28319 / BCRC 17069 / CCUG 31568 / BM 3577 / RP62A</strain>
    </source>
</reference>
<dbReference type="EC" id="5.3.2.-"/>
<dbReference type="EMBL" id="CP000029">
    <property type="protein sequence ID" value="AAW54323.1"/>
    <property type="molecule type" value="Genomic_DNA"/>
</dbReference>
<dbReference type="RefSeq" id="WP_001831035.1">
    <property type="nucleotide sequence ID" value="NC_002976.3"/>
</dbReference>
<dbReference type="SMR" id="Q5HPH8"/>
<dbReference type="STRING" id="176279.SERP0934"/>
<dbReference type="KEGG" id="ser:SERP0934"/>
<dbReference type="eggNOG" id="COG1942">
    <property type="taxonomic scope" value="Bacteria"/>
</dbReference>
<dbReference type="HOGENOM" id="CLU_148073_5_1_9"/>
<dbReference type="Proteomes" id="UP000000531">
    <property type="component" value="Chromosome"/>
</dbReference>
<dbReference type="GO" id="GO:0016853">
    <property type="term" value="F:isomerase activity"/>
    <property type="evidence" value="ECO:0007669"/>
    <property type="project" value="UniProtKB-KW"/>
</dbReference>
<dbReference type="CDD" id="cd00491">
    <property type="entry name" value="4Oxalocrotonate_Tautomerase"/>
    <property type="match status" value="1"/>
</dbReference>
<dbReference type="Gene3D" id="3.30.429.10">
    <property type="entry name" value="Macrophage Migration Inhibitory Factor"/>
    <property type="match status" value="1"/>
</dbReference>
<dbReference type="InterPro" id="IPR018191">
    <property type="entry name" value="4-OT"/>
</dbReference>
<dbReference type="InterPro" id="IPR004370">
    <property type="entry name" value="4-OT-like_dom"/>
</dbReference>
<dbReference type="InterPro" id="IPR014347">
    <property type="entry name" value="Tautomerase/MIF_sf"/>
</dbReference>
<dbReference type="NCBIfam" id="NF002571">
    <property type="entry name" value="PRK02220.1"/>
    <property type="match status" value="1"/>
</dbReference>
<dbReference type="NCBIfam" id="TIGR00013">
    <property type="entry name" value="taut"/>
    <property type="match status" value="1"/>
</dbReference>
<dbReference type="PANTHER" id="PTHR35530:SF1">
    <property type="entry name" value="2-HYDROXYMUCONATE TAUTOMERASE"/>
    <property type="match status" value="1"/>
</dbReference>
<dbReference type="PANTHER" id="PTHR35530">
    <property type="entry name" value="TAUTOMERASE-RELATED"/>
    <property type="match status" value="1"/>
</dbReference>
<dbReference type="Pfam" id="PF01361">
    <property type="entry name" value="Tautomerase"/>
    <property type="match status" value="1"/>
</dbReference>
<dbReference type="SUPFAM" id="SSF55331">
    <property type="entry name" value="Tautomerase/MIF"/>
    <property type="match status" value="1"/>
</dbReference>
<gene>
    <name type="ordered locus">SERP0934</name>
</gene>
<feature type="initiator methionine" description="Removed" evidence="1">
    <location>
        <position position="1"/>
    </location>
</feature>
<feature type="chain" id="PRO_0000209547" description="Probable tautomerase SERP0934">
    <location>
        <begin position="2"/>
        <end position="61"/>
    </location>
</feature>
<feature type="active site" description="Proton acceptor; via imino nitrogen" evidence="1">
    <location>
        <position position="2"/>
    </location>
</feature>
<sequence length="61" mass="6828">MPIINVKLLEGRSDEQLKDLVTEVTHAVEKTTGANKEAIHVVIEEMRKDHYAVGGVRKSDQ</sequence>
<name>Y934_STAEQ</name>
<comment type="similarity">
    <text evidence="2">Belongs to the 4-oxalocrotonate tautomerase family.</text>
</comment>
<accession>Q5HPH8</accession>
<proteinExistence type="inferred from homology"/>
<keyword id="KW-0413">Isomerase</keyword>
<keyword id="KW-1185">Reference proteome</keyword>
<organism>
    <name type="scientific">Staphylococcus epidermidis (strain ATCC 35984 / DSM 28319 / BCRC 17069 / CCUG 31568 / BM 3577 / RP62A)</name>
    <dbReference type="NCBI Taxonomy" id="176279"/>
    <lineage>
        <taxon>Bacteria</taxon>
        <taxon>Bacillati</taxon>
        <taxon>Bacillota</taxon>
        <taxon>Bacilli</taxon>
        <taxon>Bacillales</taxon>
        <taxon>Staphylococcaceae</taxon>
        <taxon>Staphylococcus</taxon>
    </lineage>
</organism>
<protein>
    <recommendedName>
        <fullName>Probable tautomerase SERP0934</fullName>
        <ecNumber>5.3.2.-</ecNumber>
    </recommendedName>
</protein>
<evidence type="ECO:0000250" key="1"/>
<evidence type="ECO:0000305" key="2"/>